<evidence type="ECO:0000255" key="1">
    <source>
        <dbReference type="HAMAP-Rule" id="MF_01374"/>
    </source>
</evidence>
<evidence type="ECO:0000305" key="2"/>
<organism>
    <name type="scientific">Synechococcus sp. (strain ATCC 27144 / PCC 6301 / SAUG 1402/1)</name>
    <name type="common">Anacystis nidulans</name>
    <dbReference type="NCBI Taxonomy" id="269084"/>
    <lineage>
        <taxon>Bacteria</taxon>
        <taxon>Bacillati</taxon>
        <taxon>Cyanobacteriota</taxon>
        <taxon>Cyanophyceae</taxon>
        <taxon>Synechococcales</taxon>
        <taxon>Synechococcaceae</taxon>
        <taxon>Synechococcus</taxon>
    </lineage>
</organism>
<protein>
    <recommendedName>
        <fullName evidence="1">Hydroxyacylglutathione hydrolase</fullName>
        <ecNumber evidence="1">3.1.2.6</ecNumber>
    </recommendedName>
    <alternativeName>
        <fullName evidence="1">Glyoxalase II</fullName>
        <shortName evidence="1">Glx II</shortName>
    </alternativeName>
</protein>
<proteinExistence type="inferred from homology"/>
<sequence length="258" mass="28415">MRIDCLPALQDNYIFLLVDVEQRQAAVVDPAEAEPVLAALQAEGLTLTAILNTHHHGDHVGGNRRLLRQFPEAAVSASAVDRDRIPGQTVLLEAGDRLQICGQTAEVLFVPGHTRGHIAYYFPEVAEGNPRGALFCGDTLFAGGCGRLFEGTPAQMLDSLQQLRSLPDDTAIYCAHEYTLNNLRFALTVEPDNFDLQQRYQAVAIARQQGQATIPSRLDIEKATNPFLRWDQAALQAAVSSQDPVQTLARLRSRKDQF</sequence>
<comment type="function">
    <text evidence="1">Thiolesterase that catalyzes the hydrolysis of S-D-lactoyl-glutathione to form glutathione and D-lactic acid.</text>
</comment>
<comment type="catalytic activity">
    <reaction evidence="1">
        <text>an S-(2-hydroxyacyl)glutathione + H2O = a 2-hydroxy carboxylate + glutathione + H(+)</text>
        <dbReference type="Rhea" id="RHEA:21864"/>
        <dbReference type="ChEBI" id="CHEBI:15377"/>
        <dbReference type="ChEBI" id="CHEBI:15378"/>
        <dbReference type="ChEBI" id="CHEBI:57925"/>
        <dbReference type="ChEBI" id="CHEBI:58896"/>
        <dbReference type="ChEBI" id="CHEBI:71261"/>
        <dbReference type="EC" id="3.1.2.6"/>
    </reaction>
</comment>
<comment type="cofactor">
    <cofactor evidence="1">
        <name>Zn(2+)</name>
        <dbReference type="ChEBI" id="CHEBI:29105"/>
    </cofactor>
    <text evidence="1">Binds 2 Zn(2+) ions per subunit.</text>
</comment>
<comment type="pathway">
    <text evidence="1">Secondary metabolite metabolism; methylglyoxal degradation; (R)-lactate from methylglyoxal: step 2/2.</text>
</comment>
<comment type="subunit">
    <text evidence="1">Monomer.</text>
</comment>
<comment type="similarity">
    <text evidence="1">Belongs to the metallo-beta-lactamase superfamily. Glyoxalase II family.</text>
</comment>
<comment type="sequence caution" evidence="2">
    <conflict type="frameshift">
        <sequence resource="EMBL-CDS" id="BAD78342"/>
    </conflict>
</comment>
<dbReference type="EC" id="3.1.2.6" evidence="1"/>
<dbReference type="EMBL" id="AP008231">
    <property type="protein sequence ID" value="BAD78342.1"/>
    <property type="status" value="ALT_FRAME"/>
    <property type="molecule type" value="Genomic_DNA"/>
</dbReference>
<dbReference type="RefSeq" id="WP_011378020.1">
    <property type="nucleotide sequence ID" value="NZ_CP085785.1"/>
</dbReference>
<dbReference type="SMR" id="Q5N5S6"/>
<dbReference type="GeneID" id="72430265"/>
<dbReference type="KEGG" id="syc:syc0152_d"/>
<dbReference type="eggNOG" id="COG0491">
    <property type="taxonomic scope" value="Bacteria"/>
</dbReference>
<dbReference type="UniPathway" id="UPA00619">
    <property type="reaction ID" value="UER00676"/>
</dbReference>
<dbReference type="Proteomes" id="UP000001175">
    <property type="component" value="Chromosome"/>
</dbReference>
<dbReference type="GO" id="GO:0004416">
    <property type="term" value="F:hydroxyacylglutathione hydrolase activity"/>
    <property type="evidence" value="ECO:0007669"/>
    <property type="project" value="UniProtKB-UniRule"/>
</dbReference>
<dbReference type="GO" id="GO:0046872">
    <property type="term" value="F:metal ion binding"/>
    <property type="evidence" value="ECO:0007669"/>
    <property type="project" value="UniProtKB-KW"/>
</dbReference>
<dbReference type="GO" id="GO:0019243">
    <property type="term" value="P:methylglyoxal catabolic process to D-lactate via S-lactoyl-glutathione"/>
    <property type="evidence" value="ECO:0007669"/>
    <property type="project" value="InterPro"/>
</dbReference>
<dbReference type="CDD" id="cd07723">
    <property type="entry name" value="hydroxyacylglutathione_hydrolase_MBL-fold"/>
    <property type="match status" value="1"/>
</dbReference>
<dbReference type="Gene3D" id="3.60.15.10">
    <property type="entry name" value="Ribonuclease Z/Hydroxyacylglutathione hydrolase-like"/>
    <property type="match status" value="1"/>
</dbReference>
<dbReference type="HAMAP" id="MF_01374">
    <property type="entry name" value="Glyoxalase_2"/>
    <property type="match status" value="1"/>
</dbReference>
<dbReference type="InterPro" id="IPR035680">
    <property type="entry name" value="Clx_II_MBL"/>
</dbReference>
<dbReference type="InterPro" id="IPR050110">
    <property type="entry name" value="Glyoxalase_II_hydrolase"/>
</dbReference>
<dbReference type="InterPro" id="IPR032282">
    <property type="entry name" value="HAGH_C"/>
</dbReference>
<dbReference type="InterPro" id="IPR017782">
    <property type="entry name" value="Hydroxyacylglutathione_Hdrlase"/>
</dbReference>
<dbReference type="InterPro" id="IPR001279">
    <property type="entry name" value="Metallo-B-lactamas"/>
</dbReference>
<dbReference type="InterPro" id="IPR036866">
    <property type="entry name" value="RibonucZ/Hydroxyglut_hydro"/>
</dbReference>
<dbReference type="NCBIfam" id="TIGR03413">
    <property type="entry name" value="GSH_gloB"/>
    <property type="match status" value="1"/>
</dbReference>
<dbReference type="PANTHER" id="PTHR43705">
    <property type="entry name" value="HYDROXYACYLGLUTATHIONE HYDROLASE"/>
    <property type="match status" value="1"/>
</dbReference>
<dbReference type="PANTHER" id="PTHR43705:SF1">
    <property type="entry name" value="HYDROXYACYLGLUTATHIONE HYDROLASE GLOB"/>
    <property type="match status" value="1"/>
</dbReference>
<dbReference type="Pfam" id="PF16123">
    <property type="entry name" value="HAGH_C"/>
    <property type="match status" value="1"/>
</dbReference>
<dbReference type="Pfam" id="PF00753">
    <property type="entry name" value="Lactamase_B"/>
    <property type="match status" value="1"/>
</dbReference>
<dbReference type="PIRSF" id="PIRSF005457">
    <property type="entry name" value="Glx"/>
    <property type="match status" value="1"/>
</dbReference>
<dbReference type="SMART" id="SM00849">
    <property type="entry name" value="Lactamase_B"/>
    <property type="match status" value="1"/>
</dbReference>
<dbReference type="SUPFAM" id="SSF56281">
    <property type="entry name" value="Metallo-hydrolase/oxidoreductase"/>
    <property type="match status" value="1"/>
</dbReference>
<reference key="1">
    <citation type="journal article" date="2007" name="Photosyn. Res.">
        <title>Complete nucleotide sequence of the freshwater unicellular cyanobacterium Synechococcus elongatus PCC 6301 chromosome: gene content and organization.</title>
        <authorList>
            <person name="Sugita C."/>
            <person name="Ogata K."/>
            <person name="Shikata M."/>
            <person name="Jikuya H."/>
            <person name="Takano J."/>
            <person name="Furumichi M."/>
            <person name="Kanehisa M."/>
            <person name="Omata T."/>
            <person name="Sugiura M."/>
            <person name="Sugita M."/>
        </authorList>
    </citation>
    <scope>NUCLEOTIDE SEQUENCE [LARGE SCALE GENOMIC DNA]</scope>
    <source>
        <strain>ATCC 27144 / PCC 6301 / SAUG 1402/1</strain>
    </source>
</reference>
<keyword id="KW-0378">Hydrolase</keyword>
<keyword id="KW-0479">Metal-binding</keyword>
<keyword id="KW-0862">Zinc</keyword>
<accession>Q5N5S6</accession>
<name>GLO2_SYNP6</name>
<feature type="chain" id="PRO_0000309712" description="Hydroxyacylglutathione hydrolase">
    <location>
        <begin position="1"/>
        <end position="258"/>
    </location>
</feature>
<feature type="binding site" evidence="1">
    <location>
        <position position="54"/>
    </location>
    <ligand>
        <name>Zn(2+)</name>
        <dbReference type="ChEBI" id="CHEBI:29105"/>
        <label>1</label>
    </ligand>
</feature>
<feature type="binding site" evidence="1">
    <location>
        <position position="56"/>
    </location>
    <ligand>
        <name>Zn(2+)</name>
        <dbReference type="ChEBI" id="CHEBI:29105"/>
        <label>1</label>
    </ligand>
</feature>
<feature type="binding site" evidence="1">
    <location>
        <position position="58"/>
    </location>
    <ligand>
        <name>Zn(2+)</name>
        <dbReference type="ChEBI" id="CHEBI:29105"/>
        <label>2</label>
    </ligand>
</feature>
<feature type="binding site" evidence="1">
    <location>
        <position position="59"/>
    </location>
    <ligand>
        <name>Zn(2+)</name>
        <dbReference type="ChEBI" id="CHEBI:29105"/>
        <label>2</label>
    </ligand>
</feature>
<feature type="binding site" evidence="1">
    <location>
        <position position="113"/>
    </location>
    <ligand>
        <name>Zn(2+)</name>
        <dbReference type="ChEBI" id="CHEBI:29105"/>
        <label>1</label>
    </ligand>
</feature>
<feature type="binding site" evidence="1">
    <location>
        <position position="138"/>
    </location>
    <ligand>
        <name>Zn(2+)</name>
        <dbReference type="ChEBI" id="CHEBI:29105"/>
        <label>1</label>
    </ligand>
</feature>
<feature type="binding site" evidence="1">
    <location>
        <position position="138"/>
    </location>
    <ligand>
        <name>Zn(2+)</name>
        <dbReference type="ChEBI" id="CHEBI:29105"/>
        <label>2</label>
    </ligand>
</feature>
<feature type="binding site" evidence="1">
    <location>
        <position position="176"/>
    </location>
    <ligand>
        <name>Zn(2+)</name>
        <dbReference type="ChEBI" id="CHEBI:29105"/>
        <label>2</label>
    </ligand>
</feature>
<gene>
    <name evidence="1" type="primary">gloB</name>
    <name type="ordered locus">syc0152_d</name>
</gene>